<reference key="1">
    <citation type="journal article" date="2007" name="Microbiology">
        <title>Comparative analysis of the Corynebacterium glutamicum group and complete genome sequence of strain R.</title>
        <authorList>
            <person name="Yukawa H."/>
            <person name="Omumasaba C.A."/>
            <person name="Nonaka H."/>
            <person name="Kos P."/>
            <person name="Okai N."/>
            <person name="Suzuki N."/>
            <person name="Suda M."/>
            <person name="Tsuge Y."/>
            <person name="Watanabe J."/>
            <person name="Ikeda Y."/>
            <person name="Vertes A.A."/>
            <person name="Inui M."/>
        </authorList>
    </citation>
    <scope>NUCLEOTIDE SEQUENCE [LARGE SCALE GENOMIC DNA]</scope>
    <source>
        <strain>R</strain>
    </source>
</reference>
<accession>A4QFN2</accession>
<sequence>MFLGTYTPKLDDKGRLTLPAKFREDLAGGLMVTKGQDHSLAVYPKEEFAARARKAAAVSRTNPEARAFIRNLAASADEQRPDGQGRITLSAAHRTYAGLTKECVVIGSVDFLEIWDAQAWAAYQEETEAAFSAAEDDVLGGLL</sequence>
<protein>
    <recommendedName>
        <fullName>Transcriptional regulator MraZ</fullName>
    </recommendedName>
</protein>
<dbReference type="EMBL" id="AP009044">
    <property type="protein sequence ID" value="BAF55048.1"/>
    <property type="molecule type" value="Genomic_DNA"/>
</dbReference>
<dbReference type="RefSeq" id="WP_003856549.1">
    <property type="nucleotide sequence ID" value="NC_009342.1"/>
</dbReference>
<dbReference type="SMR" id="A4QFN2"/>
<dbReference type="GeneID" id="1020119"/>
<dbReference type="KEGG" id="cgt:cgR_2049"/>
<dbReference type="HOGENOM" id="CLU_107907_0_5_11"/>
<dbReference type="PhylomeDB" id="A4QFN2"/>
<dbReference type="Proteomes" id="UP000006698">
    <property type="component" value="Chromosome"/>
</dbReference>
<dbReference type="GO" id="GO:0005737">
    <property type="term" value="C:cytoplasm"/>
    <property type="evidence" value="ECO:0007669"/>
    <property type="project" value="UniProtKB-UniRule"/>
</dbReference>
<dbReference type="GO" id="GO:0009295">
    <property type="term" value="C:nucleoid"/>
    <property type="evidence" value="ECO:0007669"/>
    <property type="project" value="UniProtKB-SubCell"/>
</dbReference>
<dbReference type="GO" id="GO:0003700">
    <property type="term" value="F:DNA-binding transcription factor activity"/>
    <property type="evidence" value="ECO:0007669"/>
    <property type="project" value="UniProtKB-UniRule"/>
</dbReference>
<dbReference type="GO" id="GO:0000976">
    <property type="term" value="F:transcription cis-regulatory region binding"/>
    <property type="evidence" value="ECO:0007669"/>
    <property type="project" value="TreeGrafter"/>
</dbReference>
<dbReference type="GO" id="GO:2000143">
    <property type="term" value="P:negative regulation of DNA-templated transcription initiation"/>
    <property type="evidence" value="ECO:0007669"/>
    <property type="project" value="TreeGrafter"/>
</dbReference>
<dbReference type="CDD" id="cd16321">
    <property type="entry name" value="MraZ_C"/>
    <property type="match status" value="1"/>
</dbReference>
<dbReference type="CDD" id="cd16320">
    <property type="entry name" value="MraZ_N"/>
    <property type="match status" value="1"/>
</dbReference>
<dbReference type="Gene3D" id="3.40.1550.20">
    <property type="entry name" value="Transcriptional regulator MraZ domain"/>
    <property type="match status" value="1"/>
</dbReference>
<dbReference type="HAMAP" id="MF_01008">
    <property type="entry name" value="MraZ"/>
    <property type="match status" value="1"/>
</dbReference>
<dbReference type="InterPro" id="IPR003444">
    <property type="entry name" value="MraZ"/>
</dbReference>
<dbReference type="InterPro" id="IPR035644">
    <property type="entry name" value="MraZ_C"/>
</dbReference>
<dbReference type="InterPro" id="IPR020603">
    <property type="entry name" value="MraZ_dom"/>
</dbReference>
<dbReference type="InterPro" id="IPR035642">
    <property type="entry name" value="MraZ_N"/>
</dbReference>
<dbReference type="InterPro" id="IPR038619">
    <property type="entry name" value="MraZ_sf"/>
</dbReference>
<dbReference type="InterPro" id="IPR007159">
    <property type="entry name" value="SpoVT-AbrB_dom"/>
</dbReference>
<dbReference type="InterPro" id="IPR037914">
    <property type="entry name" value="SpoVT-AbrB_sf"/>
</dbReference>
<dbReference type="NCBIfam" id="TIGR00242">
    <property type="entry name" value="division/cell wall cluster transcriptional repressor MraZ"/>
    <property type="match status" value="1"/>
</dbReference>
<dbReference type="PANTHER" id="PTHR34701">
    <property type="entry name" value="TRANSCRIPTIONAL REGULATOR MRAZ"/>
    <property type="match status" value="1"/>
</dbReference>
<dbReference type="PANTHER" id="PTHR34701:SF1">
    <property type="entry name" value="TRANSCRIPTIONAL REGULATOR MRAZ"/>
    <property type="match status" value="1"/>
</dbReference>
<dbReference type="Pfam" id="PF02381">
    <property type="entry name" value="MraZ"/>
    <property type="match status" value="2"/>
</dbReference>
<dbReference type="SUPFAM" id="SSF89447">
    <property type="entry name" value="AbrB/MazE/MraZ-like"/>
    <property type="match status" value="1"/>
</dbReference>
<dbReference type="PROSITE" id="PS51740">
    <property type="entry name" value="SPOVT_ABRB"/>
    <property type="match status" value="2"/>
</dbReference>
<keyword id="KW-0963">Cytoplasm</keyword>
<keyword id="KW-0238">DNA-binding</keyword>
<keyword id="KW-0677">Repeat</keyword>
<keyword id="KW-0804">Transcription</keyword>
<keyword id="KW-0805">Transcription regulation</keyword>
<organism>
    <name type="scientific">Corynebacterium glutamicum (strain R)</name>
    <dbReference type="NCBI Taxonomy" id="340322"/>
    <lineage>
        <taxon>Bacteria</taxon>
        <taxon>Bacillati</taxon>
        <taxon>Actinomycetota</taxon>
        <taxon>Actinomycetes</taxon>
        <taxon>Mycobacteriales</taxon>
        <taxon>Corynebacteriaceae</taxon>
        <taxon>Corynebacterium</taxon>
    </lineage>
</organism>
<gene>
    <name evidence="1" type="primary">mraZ</name>
    <name type="ordered locus">cgR_2049</name>
</gene>
<comment type="subunit">
    <text evidence="1">Forms oligomers.</text>
</comment>
<comment type="subcellular location">
    <subcellularLocation>
        <location evidence="1">Cytoplasm</location>
        <location evidence="1">Nucleoid</location>
    </subcellularLocation>
</comment>
<comment type="similarity">
    <text evidence="1">Belongs to the MraZ family.</text>
</comment>
<name>MRAZ_CORGB</name>
<feature type="chain" id="PRO_1000062866" description="Transcriptional regulator MraZ">
    <location>
        <begin position="1"/>
        <end position="143"/>
    </location>
</feature>
<feature type="domain" description="SpoVT-AbrB 1" evidence="2">
    <location>
        <begin position="5"/>
        <end position="47"/>
    </location>
</feature>
<feature type="domain" description="SpoVT-AbrB 2" evidence="2">
    <location>
        <begin position="76"/>
        <end position="119"/>
    </location>
</feature>
<evidence type="ECO:0000255" key="1">
    <source>
        <dbReference type="HAMAP-Rule" id="MF_01008"/>
    </source>
</evidence>
<evidence type="ECO:0000255" key="2">
    <source>
        <dbReference type="PROSITE-ProRule" id="PRU01076"/>
    </source>
</evidence>
<proteinExistence type="inferred from homology"/>